<accession>Q3E811</accession>
<accession>D6VYG8</accession>
<name>RRT15_YEAST</name>
<keyword id="KW-1185">Reference proteome</keyword>
<keyword id="KW-0804">Transcription</keyword>
<keyword id="KW-0805">Transcription regulation</keyword>
<feature type="chain" id="PRO_0000262879" description="Regulator of rDNA transcription protein 15">
    <location>
        <begin position="1"/>
        <end position="62"/>
    </location>
</feature>
<sequence length="62" mass="7280">MVCIHTENQNQGDFYPFVLLEISVLHESPLGHLRYRLTDVPPQPNSPGEIYCFYINCIMNRR</sequence>
<gene>
    <name type="primary">RRT15</name>
    <name type="ordered locus">YLR162W-A</name>
    <name type="ORF">smORF483</name>
</gene>
<proteinExistence type="inferred from homology"/>
<organism>
    <name type="scientific">Saccharomyces cerevisiae (strain ATCC 204508 / S288c)</name>
    <name type="common">Baker's yeast</name>
    <dbReference type="NCBI Taxonomy" id="559292"/>
    <lineage>
        <taxon>Eukaryota</taxon>
        <taxon>Fungi</taxon>
        <taxon>Dikarya</taxon>
        <taxon>Ascomycota</taxon>
        <taxon>Saccharomycotina</taxon>
        <taxon>Saccharomycetes</taxon>
        <taxon>Saccharomycetales</taxon>
        <taxon>Saccharomycetaceae</taxon>
        <taxon>Saccharomyces</taxon>
    </lineage>
</organism>
<reference key="1">
    <citation type="journal article" date="1997" name="Nature">
        <title>The nucleotide sequence of Saccharomyces cerevisiae chromosome XII.</title>
        <authorList>
            <person name="Johnston M."/>
            <person name="Hillier L.W."/>
            <person name="Riles L."/>
            <person name="Albermann K."/>
            <person name="Andre B."/>
            <person name="Ansorge W."/>
            <person name="Benes V."/>
            <person name="Brueckner M."/>
            <person name="Delius H."/>
            <person name="Dubois E."/>
            <person name="Duesterhoeft A."/>
            <person name="Entian K.-D."/>
            <person name="Floeth M."/>
            <person name="Goffeau A."/>
            <person name="Hebling U."/>
            <person name="Heumann K."/>
            <person name="Heuss-Neitzel D."/>
            <person name="Hilbert H."/>
            <person name="Hilger F."/>
            <person name="Kleine K."/>
            <person name="Koetter P."/>
            <person name="Louis E.J."/>
            <person name="Messenguy F."/>
            <person name="Mewes H.-W."/>
            <person name="Miosga T."/>
            <person name="Moestl D."/>
            <person name="Mueller-Auer S."/>
            <person name="Nentwich U."/>
            <person name="Obermaier B."/>
            <person name="Piravandi E."/>
            <person name="Pohl T.M."/>
            <person name="Portetelle D."/>
            <person name="Purnelle B."/>
            <person name="Rechmann S."/>
            <person name="Rieger M."/>
            <person name="Rinke M."/>
            <person name="Rose M."/>
            <person name="Scharfe M."/>
            <person name="Scherens B."/>
            <person name="Scholler P."/>
            <person name="Schwager C."/>
            <person name="Schwarz S."/>
            <person name="Underwood A.P."/>
            <person name="Urrestarazu L.A."/>
            <person name="Vandenbol M."/>
            <person name="Verhasselt P."/>
            <person name="Vierendeels F."/>
            <person name="Voet M."/>
            <person name="Volckaert G."/>
            <person name="Voss H."/>
            <person name="Wambutt R."/>
            <person name="Wedler E."/>
            <person name="Wedler H."/>
            <person name="Zimmermann F.K."/>
            <person name="Zollner A."/>
            <person name="Hani J."/>
            <person name="Hoheisel J.D."/>
        </authorList>
    </citation>
    <scope>NUCLEOTIDE SEQUENCE [LARGE SCALE GENOMIC DNA]</scope>
    <source>
        <strain>ATCC 204508 / S288c</strain>
    </source>
</reference>
<reference key="2">
    <citation type="journal article" date="2014" name="G3 (Bethesda)">
        <title>The reference genome sequence of Saccharomyces cerevisiae: Then and now.</title>
        <authorList>
            <person name="Engel S.R."/>
            <person name="Dietrich F.S."/>
            <person name="Fisk D.G."/>
            <person name="Binkley G."/>
            <person name="Balakrishnan R."/>
            <person name="Costanzo M.C."/>
            <person name="Dwight S.S."/>
            <person name="Hitz B.C."/>
            <person name="Karra K."/>
            <person name="Nash R.S."/>
            <person name="Weng S."/>
            <person name="Wong E.D."/>
            <person name="Lloyd P."/>
            <person name="Skrzypek M.S."/>
            <person name="Miyasato S.R."/>
            <person name="Simison M."/>
            <person name="Cherry J.M."/>
        </authorList>
    </citation>
    <scope>GENOME REANNOTATION</scope>
    <source>
        <strain>ATCC 204508 / S288c</strain>
    </source>
</reference>
<reference key="3">
    <citation type="journal article" date="2003" name="Genome Res.">
        <title>Systematic discovery of new genes in the Saccharomyces cerevisiae genome.</title>
        <authorList>
            <person name="Kessler M.M."/>
            <person name="Zeng Q."/>
            <person name="Hogan S."/>
            <person name="Cook R."/>
            <person name="Morales A.J."/>
            <person name="Cottarel G."/>
        </authorList>
    </citation>
    <scope>GENOME REANNOTATION</scope>
</reference>
<reference key="4">
    <citation type="journal article" date="2009" name="Genetics">
        <title>Genetic identification of factors that modulate ribosomal DNA transcription in Saccharomyces cerevisiae.</title>
        <authorList>
            <person name="Hontz R.D."/>
            <person name="Niederer R.O."/>
            <person name="Johnson J.M."/>
            <person name="Smith J.S."/>
        </authorList>
    </citation>
    <scope>FUNCTION</scope>
</reference>
<protein>
    <recommendedName>
        <fullName>Regulator of rDNA transcription protein 15</fullName>
    </recommendedName>
</protein>
<comment type="function">
    <text evidence="1">Involved in modulation of rDNA transcription.</text>
</comment>
<comment type="similarity">
    <text evidence="2">Belongs to the ART2/RRT15 family.</text>
</comment>
<dbReference type="EMBL" id="U51921">
    <property type="status" value="NOT_ANNOTATED_CDS"/>
    <property type="molecule type" value="Genomic_DNA"/>
</dbReference>
<dbReference type="EMBL" id="BK006945">
    <property type="protein sequence ID" value="DAA09484.1"/>
    <property type="molecule type" value="Genomic_DNA"/>
</dbReference>
<dbReference type="RefSeq" id="NP_878128.1">
    <property type="nucleotide sequence ID" value="NM_001184566.1"/>
</dbReference>
<dbReference type="BioGRID" id="36958">
    <property type="interactions" value="31"/>
</dbReference>
<dbReference type="FunCoup" id="Q3E811">
    <property type="interactions" value="17"/>
</dbReference>
<dbReference type="STRING" id="4932.YLR162W-A"/>
<dbReference type="PaxDb" id="4932-YLR162W-A"/>
<dbReference type="EnsemblFungi" id="YLR162W-A_mRNA">
    <property type="protein sequence ID" value="YLR162W-A"/>
    <property type="gene ID" value="YLR162W-A"/>
</dbReference>
<dbReference type="GeneID" id="1466416"/>
<dbReference type="KEGG" id="sce:YLR162W-A"/>
<dbReference type="AGR" id="SGD:S000028567"/>
<dbReference type="SGD" id="S000028567">
    <property type="gene designation" value="RRT15"/>
</dbReference>
<dbReference type="VEuPathDB" id="FungiDB:YLR162W-A"/>
<dbReference type="GeneTree" id="ENSGT00940000176660"/>
<dbReference type="HOGENOM" id="CLU_112614_5_2_1"/>
<dbReference type="InParanoid" id="Q3E811"/>
<dbReference type="OMA" id="FYINCIM"/>
<dbReference type="OrthoDB" id="3996251at2759"/>
<dbReference type="BioCyc" id="YEAST:G3O-32580-MONOMER"/>
<dbReference type="BioGRID-ORCS" id="1466416">
    <property type="hits" value="1 hit in 10 CRISPR screens"/>
</dbReference>
<dbReference type="PRO" id="PR:Q3E811"/>
<dbReference type="Proteomes" id="UP000002311">
    <property type="component" value="Chromosome XII"/>
</dbReference>
<dbReference type="RNAct" id="Q3E811">
    <property type="molecule type" value="protein"/>
</dbReference>
<dbReference type="InterPro" id="IPR052997">
    <property type="entry name" value="RRT15-like"/>
</dbReference>
<dbReference type="PANTHER" id="PTHR33047">
    <property type="entry name" value="PROTEIN TAR1"/>
    <property type="match status" value="1"/>
</dbReference>
<dbReference type="PANTHER" id="PTHR33047:SF8">
    <property type="entry name" value="REGULATOR OF RDNA TRANSCRIPTION PROTEIN 15"/>
    <property type="match status" value="1"/>
</dbReference>
<evidence type="ECO:0000269" key="1">
    <source>
    </source>
</evidence>
<evidence type="ECO:0000305" key="2"/>